<sequence length="196" mass="21343">MGWWLFPILGYFIGSIPFSYLIPKWLKGIDVRKVGSGNVGATNAIRTTGPAVGGICLLLDALKGFFPVFITITFSGDSKIVSLTAIATVLGHDFPIFMKFKGGKGVASTLGIIFCLSWPTGLVFTLTWLVIVMLTKYASLGSLVALYVSALLGYLLKGYDTGMLFLILAVLSTLRHSENIQRLLNGTERKVNLFKR</sequence>
<proteinExistence type="inferred from homology"/>
<feature type="chain" id="PRO_0000188480" description="Glycerol-3-phosphate acyltransferase 2">
    <location>
        <begin position="1"/>
        <end position="196"/>
    </location>
</feature>
<feature type="transmembrane region" description="Helical" evidence="1">
    <location>
        <begin position="2"/>
        <end position="22"/>
    </location>
</feature>
<feature type="transmembrane region" description="Helical" evidence="1">
    <location>
        <begin position="52"/>
        <end position="72"/>
    </location>
</feature>
<feature type="transmembrane region" description="Helical" evidence="1">
    <location>
        <begin position="80"/>
        <end position="100"/>
    </location>
</feature>
<feature type="transmembrane region" description="Helical" evidence="1">
    <location>
        <begin position="112"/>
        <end position="132"/>
    </location>
</feature>
<feature type="transmembrane region" description="Helical" evidence="1">
    <location>
        <begin position="137"/>
        <end position="156"/>
    </location>
</feature>
<accession>Q9X1F9</accession>
<organism>
    <name type="scientific">Thermotoga maritima (strain ATCC 43589 / DSM 3109 / JCM 10099 / NBRC 100826 / MSB8)</name>
    <dbReference type="NCBI Taxonomy" id="243274"/>
    <lineage>
        <taxon>Bacteria</taxon>
        <taxon>Thermotogati</taxon>
        <taxon>Thermotogota</taxon>
        <taxon>Thermotogae</taxon>
        <taxon>Thermotogales</taxon>
        <taxon>Thermotogaceae</taxon>
        <taxon>Thermotoga</taxon>
    </lineage>
</organism>
<dbReference type="EC" id="2.3.1.275" evidence="1"/>
<dbReference type="EMBL" id="AE000512">
    <property type="protein sequence ID" value="AAD36515.1"/>
    <property type="molecule type" value="Genomic_DNA"/>
</dbReference>
<dbReference type="PIR" id="C72253">
    <property type="entry name" value="C72253"/>
</dbReference>
<dbReference type="RefSeq" id="NP_229246.1">
    <property type="nucleotide sequence ID" value="NC_000853.1"/>
</dbReference>
<dbReference type="SMR" id="Q9X1F9"/>
<dbReference type="FunCoup" id="Q9X1F9">
    <property type="interactions" value="184"/>
</dbReference>
<dbReference type="STRING" id="243274.TM_1447"/>
<dbReference type="PaxDb" id="243274-THEMA_07080"/>
<dbReference type="EnsemblBacteria" id="AAD36515">
    <property type="protein sequence ID" value="AAD36515"/>
    <property type="gene ID" value="TM_1447"/>
</dbReference>
<dbReference type="KEGG" id="tma:TM1447"/>
<dbReference type="KEGG" id="tmi:THEMA_07080"/>
<dbReference type="KEGG" id="tmm:Tmari_1453"/>
<dbReference type="KEGG" id="tmw:THMA_1477"/>
<dbReference type="eggNOG" id="COG0344">
    <property type="taxonomic scope" value="Bacteria"/>
</dbReference>
<dbReference type="InParanoid" id="Q9X1F9"/>
<dbReference type="OrthoDB" id="9777124at2"/>
<dbReference type="UniPathway" id="UPA00085"/>
<dbReference type="Proteomes" id="UP000008183">
    <property type="component" value="Chromosome"/>
</dbReference>
<dbReference type="GO" id="GO:0005886">
    <property type="term" value="C:plasma membrane"/>
    <property type="evidence" value="ECO:0000318"/>
    <property type="project" value="GO_Central"/>
</dbReference>
<dbReference type="GO" id="GO:0043772">
    <property type="term" value="F:acyl-phosphate glycerol-3-phosphate acyltransferase activity"/>
    <property type="evidence" value="ECO:0007669"/>
    <property type="project" value="UniProtKB-UniRule"/>
</dbReference>
<dbReference type="GO" id="GO:0008654">
    <property type="term" value="P:phospholipid biosynthetic process"/>
    <property type="evidence" value="ECO:0007669"/>
    <property type="project" value="UniProtKB-UniRule"/>
</dbReference>
<dbReference type="HAMAP" id="MF_01043">
    <property type="entry name" value="PlsY"/>
    <property type="match status" value="1"/>
</dbReference>
<dbReference type="InterPro" id="IPR003811">
    <property type="entry name" value="G3P_acylTferase_PlsY"/>
</dbReference>
<dbReference type="NCBIfam" id="TIGR00023">
    <property type="entry name" value="glycerol-3-phosphate 1-O-acyltransferase PlsY"/>
    <property type="match status" value="1"/>
</dbReference>
<dbReference type="PANTHER" id="PTHR30309:SF0">
    <property type="entry name" value="GLYCEROL-3-PHOSPHATE ACYLTRANSFERASE-RELATED"/>
    <property type="match status" value="1"/>
</dbReference>
<dbReference type="PANTHER" id="PTHR30309">
    <property type="entry name" value="INNER MEMBRANE PROTEIN YGIH"/>
    <property type="match status" value="1"/>
</dbReference>
<dbReference type="Pfam" id="PF02660">
    <property type="entry name" value="G3P_acyltransf"/>
    <property type="match status" value="1"/>
</dbReference>
<dbReference type="SMART" id="SM01207">
    <property type="entry name" value="G3P_acyltransf"/>
    <property type="match status" value="1"/>
</dbReference>
<name>PLSY2_THEMA</name>
<reference key="1">
    <citation type="journal article" date="1999" name="Nature">
        <title>Evidence for lateral gene transfer between Archaea and Bacteria from genome sequence of Thermotoga maritima.</title>
        <authorList>
            <person name="Nelson K.E."/>
            <person name="Clayton R.A."/>
            <person name="Gill S.R."/>
            <person name="Gwinn M.L."/>
            <person name="Dodson R.J."/>
            <person name="Haft D.H."/>
            <person name="Hickey E.K."/>
            <person name="Peterson J.D."/>
            <person name="Nelson W.C."/>
            <person name="Ketchum K.A."/>
            <person name="McDonald L.A."/>
            <person name="Utterback T.R."/>
            <person name="Malek J.A."/>
            <person name="Linher K.D."/>
            <person name="Garrett M.M."/>
            <person name="Stewart A.M."/>
            <person name="Cotton M.D."/>
            <person name="Pratt M.S."/>
            <person name="Phillips C.A."/>
            <person name="Richardson D.L."/>
            <person name="Heidelberg J.F."/>
            <person name="Sutton G.G."/>
            <person name="Fleischmann R.D."/>
            <person name="Eisen J.A."/>
            <person name="White O."/>
            <person name="Salzberg S.L."/>
            <person name="Smith H.O."/>
            <person name="Venter J.C."/>
            <person name="Fraser C.M."/>
        </authorList>
    </citation>
    <scope>NUCLEOTIDE SEQUENCE [LARGE SCALE GENOMIC DNA]</scope>
    <source>
        <strain>ATCC 43589 / DSM 3109 / JCM 10099 / NBRC 100826 / MSB8</strain>
    </source>
</reference>
<comment type="function">
    <text evidence="1">Catalyzes the transfer of an acyl group from acyl-phosphate (acyl-PO(4)) to glycerol-3-phosphate (G3P) to form lysophosphatidic acid (LPA). This enzyme utilizes acyl-phosphate as fatty acyl donor, but not acyl-CoA or acyl-ACP.</text>
</comment>
<comment type="catalytic activity">
    <reaction evidence="1">
        <text>an acyl phosphate + sn-glycerol 3-phosphate = a 1-acyl-sn-glycero-3-phosphate + phosphate</text>
        <dbReference type="Rhea" id="RHEA:34075"/>
        <dbReference type="ChEBI" id="CHEBI:43474"/>
        <dbReference type="ChEBI" id="CHEBI:57597"/>
        <dbReference type="ChEBI" id="CHEBI:57970"/>
        <dbReference type="ChEBI" id="CHEBI:59918"/>
        <dbReference type="EC" id="2.3.1.275"/>
    </reaction>
</comment>
<comment type="pathway">
    <text evidence="1">Lipid metabolism; phospholipid metabolism.</text>
</comment>
<comment type="subunit">
    <text evidence="1">Probably interacts with PlsX.</text>
</comment>
<comment type="subcellular location">
    <subcellularLocation>
        <location evidence="1">Cell inner membrane</location>
        <topology evidence="1">Multi-pass membrane protein</topology>
    </subcellularLocation>
</comment>
<comment type="similarity">
    <text evidence="1">Belongs to the PlsY family.</text>
</comment>
<keyword id="KW-0997">Cell inner membrane</keyword>
<keyword id="KW-1003">Cell membrane</keyword>
<keyword id="KW-0444">Lipid biosynthesis</keyword>
<keyword id="KW-0443">Lipid metabolism</keyword>
<keyword id="KW-0472">Membrane</keyword>
<keyword id="KW-0594">Phospholipid biosynthesis</keyword>
<keyword id="KW-1208">Phospholipid metabolism</keyword>
<keyword id="KW-1185">Reference proteome</keyword>
<keyword id="KW-0808">Transferase</keyword>
<keyword id="KW-0812">Transmembrane</keyword>
<keyword id="KW-1133">Transmembrane helix</keyword>
<evidence type="ECO:0000255" key="1">
    <source>
        <dbReference type="HAMAP-Rule" id="MF_01043"/>
    </source>
</evidence>
<gene>
    <name evidence="1" type="primary">plsY2</name>
    <name type="ordered locus">TM_1447</name>
</gene>
<protein>
    <recommendedName>
        <fullName evidence="1">Glycerol-3-phosphate acyltransferase 2</fullName>
    </recommendedName>
    <alternativeName>
        <fullName evidence="1">Acyl-PO4 G3P acyltransferase 2</fullName>
    </alternativeName>
    <alternativeName>
        <fullName evidence="1">Acyl-phosphate--glycerol-3-phosphate acyltransferase 2</fullName>
    </alternativeName>
    <alternativeName>
        <fullName evidence="1">G3P acyltransferase 2</fullName>
        <shortName evidence="1">GPAT 2</shortName>
        <ecNumber evidence="1">2.3.1.275</ecNumber>
    </alternativeName>
    <alternativeName>
        <fullName evidence="1">Lysophosphatidic acid synthase 2</fullName>
        <shortName evidence="1">LPA synthase 2</shortName>
    </alternativeName>
</protein>